<accession>B7MSH6</accession>
<reference key="1">
    <citation type="journal article" date="2009" name="PLoS Genet.">
        <title>Organised genome dynamics in the Escherichia coli species results in highly diverse adaptive paths.</title>
        <authorList>
            <person name="Touchon M."/>
            <person name="Hoede C."/>
            <person name="Tenaillon O."/>
            <person name="Barbe V."/>
            <person name="Baeriswyl S."/>
            <person name="Bidet P."/>
            <person name="Bingen E."/>
            <person name="Bonacorsi S."/>
            <person name="Bouchier C."/>
            <person name="Bouvet O."/>
            <person name="Calteau A."/>
            <person name="Chiapello H."/>
            <person name="Clermont O."/>
            <person name="Cruveiller S."/>
            <person name="Danchin A."/>
            <person name="Diard M."/>
            <person name="Dossat C."/>
            <person name="Karoui M.E."/>
            <person name="Frapy E."/>
            <person name="Garry L."/>
            <person name="Ghigo J.M."/>
            <person name="Gilles A.M."/>
            <person name="Johnson J."/>
            <person name="Le Bouguenec C."/>
            <person name="Lescat M."/>
            <person name="Mangenot S."/>
            <person name="Martinez-Jehanne V."/>
            <person name="Matic I."/>
            <person name="Nassif X."/>
            <person name="Oztas S."/>
            <person name="Petit M.A."/>
            <person name="Pichon C."/>
            <person name="Rouy Z."/>
            <person name="Ruf C.S."/>
            <person name="Schneider D."/>
            <person name="Tourret J."/>
            <person name="Vacherie B."/>
            <person name="Vallenet D."/>
            <person name="Medigue C."/>
            <person name="Rocha E.P.C."/>
            <person name="Denamur E."/>
        </authorList>
    </citation>
    <scope>NUCLEOTIDE SEQUENCE [LARGE SCALE GENOMIC DNA]</scope>
    <source>
        <strain>ED1a</strain>
    </source>
</reference>
<proteinExistence type="inferred from homology"/>
<feature type="chain" id="PRO_1000184878" description="Cation/acetate symporter ActP">
    <location>
        <begin position="1"/>
        <end position="549"/>
    </location>
</feature>
<feature type="transmembrane region" description="Helical" evidence="1">
    <location>
        <begin position="33"/>
        <end position="53"/>
    </location>
</feature>
<feature type="transmembrane region" description="Helical" evidence="1">
    <location>
        <begin position="77"/>
        <end position="97"/>
    </location>
</feature>
<feature type="transmembrane region" description="Helical" evidence="1">
    <location>
        <begin position="103"/>
        <end position="123"/>
    </location>
</feature>
<feature type="transmembrane region" description="Helical" evidence="1">
    <location>
        <begin position="148"/>
        <end position="168"/>
    </location>
</feature>
<feature type="transmembrane region" description="Helical" evidence="1">
    <location>
        <begin position="183"/>
        <end position="203"/>
    </location>
</feature>
<feature type="transmembrane region" description="Helical" evidence="1">
    <location>
        <begin position="206"/>
        <end position="226"/>
    </location>
</feature>
<feature type="transmembrane region" description="Helical" evidence="1">
    <location>
        <begin position="262"/>
        <end position="282"/>
    </location>
</feature>
<feature type="transmembrane region" description="Helical" evidence="1">
    <location>
        <begin position="303"/>
        <end position="323"/>
    </location>
</feature>
<feature type="transmembrane region" description="Helical" evidence="1">
    <location>
        <begin position="355"/>
        <end position="375"/>
    </location>
</feature>
<feature type="transmembrane region" description="Helical" evidence="1">
    <location>
        <begin position="404"/>
        <end position="424"/>
    </location>
</feature>
<feature type="transmembrane region" description="Helical" evidence="1">
    <location>
        <begin position="428"/>
        <end position="448"/>
    </location>
</feature>
<feature type="transmembrane region" description="Helical" evidence="1">
    <location>
        <begin position="464"/>
        <end position="484"/>
    </location>
</feature>
<feature type="transmembrane region" description="Helical" evidence="1">
    <location>
        <begin position="493"/>
        <end position="513"/>
    </location>
</feature>
<name>ACTP_ECO81</name>
<organism>
    <name type="scientific">Escherichia coli O81 (strain ED1a)</name>
    <dbReference type="NCBI Taxonomy" id="585397"/>
    <lineage>
        <taxon>Bacteria</taxon>
        <taxon>Pseudomonadati</taxon>
        <taxon>Pseudomonadota</taxon>
        <taxon>Gammaproteobacteria</taxon>
        <taxon>Enterobacterales</taxon>
        <taxon>Enterobacteriaceae</taxon>
        <taxon>Escherichia</taxon>
    </lineage>
</organism>
<dbReference type="EMBL" id="CU928162">
    <property type="protein sequence ID" value="CAR10900.2"/>
    <property type="molecule type" value="Genomic_DNA"/>
</dbReference>
<dbReference type="RefSeq" id="WP_000832549.1">
    <property type="nucleotide sequence ID" value="NC_011745.1"/>
</dbReference>
<dbReference type="SMR" id="B7MSH6"/>
<dbReference type="KEGG" id="ecq:ECED1_4795"/>
<dbReference type="HOGENOM" id="CLU_018808_8_3_6"/>
<dbReference type="Proteomes" id="UP000000748">
    <property type="component" value="Chromosome"/>
</dbReference>
<dbReference type="GO" id="GO:0005886">
    <property type="term" value="C:plasma membrane"/>
    <property type="evidence" value="ECO:0007669"/>
    <property type="project" value="UniProtKB-SubCell"/>
</dbReference>
<dbReference type="GO" id="GO:0015123">
    <property type="term" value="F:acetate transmembrane transporter activity"/>
    <property type="evidence" value="ECO:0007669"/>
    <property type="project" value="UniProtKB-UniRule"/>
</dbReference>
<dbReference type="GO" id="GO:0043879">
    <property type="term" value="F:glycolate transmembrane transporter activity"/>
    <property type="evidence" value="ECO:0007669"/>
    <property type="project" value="InterPro"/>
</dbReference>
<dbReference type="GO" id="GO:0015293">
    <property type="term" value="F:symporter activity"/>
    <property type="evidence" value="ECO:0007669"/>
    <property type="project" value="UniProtKB-KW"/>
</dbReference>
<dbReference type="GO" id="GO:0006847">
    <property type="term" value="P:plasma membrane acetate transport"/>
    <property type="evidence" value="ECO:0007669"/>
    <property type="project" value="TreeGrafter"/>
</dbReference>
<dbReference type="GO" id="GO:0006814">
    <property type="term" value="P:sodium ion transport"/>
    <property type="evidence" value="ECO:0007669"/>
    <property type="project" value="UniProtKB-KW"/>
</dbReference>
<dbReference type="CDD" id="cd11480">
    <property type="entry name" value="SLC5sbd_u4"/>
    <property type="match status" value="1"/>
</dbReference>
<dbReference type="FunFam" id="1.20.1730.10:FF:000001">
    <property type="entry name" value="Cation/acetate symporter ActP"/>
    <property type="match status" value="1"/>
</dbReference>
<dbReference type="Gene3D" id="1.20.1730.10">
    <property type="entry name" value="Sodium/glucose cotransporter"/>
    <property type="match status" value="1"/>
</dbReference>
<dbReference type="HAMAP" id="MF_01426">
    <property type="entry name" value="Acet_symport_ActP"/>
    <property type="match status" value="1"/>
</dbReference>
<dbReference type="InterPro" id="IPR014083">
    <property type="entry name" value="Cation/Ac_symporter_ActP"/>
</dbReference>
<dbReference type="InterPro" id="IPR038377">
    <property type="entry name" value="Na/Glc_symporter_sf"/>
</dbReference>
<dbReference type="InterPro" id="IPR001734">
    <property type="entry name" value="Na/solute_symporter"/>
</dbReference>
<dbReference type="InterPro" id="IPR018212">
    <property type="entry name" value="Na/solute_symporter_CS"/>
</dbReference>
<dbReference type="InterPro" id="IPR050277">
    <property type="entry name" value="Sodium:Solute_Symporter"/>
</dbReference>
<dbReference type="NCBIfam" id="NF006903">
    <property type="entry name" value="PRK09395.1"/>
    <property type="match status" value="1"/>
</dbReference>
<dbReference type="NCBIfam" id="NF009135">
    <property type="entry name" value="PRK12488.1"/>
    <property type="match status" value="1"/>
</dbReference>
<dbReference type="NCBIfam" id="TIGR00813">
    <property type="entry name" value="sss"/>
    <property type="match status" value="1"/>
</dbReference>
<dbReference type="NCBIfam" id="TIGR02711">
    <property type="entry name" value="symport_actP"/>
    <property type="match status" value="1"/>
</dbReference>
<dbReference type="PANTHER" id="PTHR48086:SF6">
    <property type="entry name" value="CATION_ACETATE SYMPORTER ACTP"/>
    <property type="match status" value="1"/>
</dbReference>
<dbReference type="PANTHER" id="PTHR48086">
    <property type="entry name" value="SODIUM/PROLINE SYMPORTER-RELATED"/>
    <property type="match status" value="1"/>
</dbReference>
<dbReference type="Pfam" id="PF00474">
    <property type="entry name" value="SSF"/>
    <property type="match status" value="1"/>
</dbReference>
<dbReference type="PROSITE" id="PS00456">
    <property type="entry name" value="NA_SOLUT_SYMP_1"/>
    <property type="match status" value="1"/>
</dbReference>
<dbReference type="PROSITE" id="PS00457">
    <property type="entry name" value="NA_SOLUT_SYMP_2"/>
    <property type="match status" value="1"/>
</dbReference>
<dbReference type="PROSITE" id="PS50283">
    <property type="entry name" value="NA_SOLUT_SYMP_3"/>
    <property type="match status" value="1"/>
</dbReference>
<gene>
    <name evidence="1" type="primary">actP</name>
    <name type="ordered locus">ECED1_4795</name>
</gene>
<keyword id="KW-0997">Cell inner membrane</keyword>
<keyword id="KW-1003">Cell membrane</keyword>
<keyword id="KW-0406">Ion transport</keyword>
<keyword id="KW-0472">Membrane</keyword>
<keyword id="KW-0915">Sodium</keyword>
<keyword id="KW-0739">Sodium transport</keyword>
<keyword id="KW-0769">Symport</keyword>
<keyword id="KW-0812">Transmembrane</keyword>
<keyword id="KW-1133">Transmembrane helix</keyword>
<keyword id="KW-0813">Transport</keyword>
<sequence length="549" mass="59158">MKRVLTALAATLPFAANAADAISGAVERQPTNWQAIIMFLIFVVFTLGITYWASKRVRSRNDYYTAGGNITGFQNGLAIAGDYMSAASFLGISALVFTSGYDGLIYSLGFLVGWPIILFLIAERLRNLGRYTFADVASYRLKQGPIRILSACGSLVVVALYLIAQMVGAGKLIELLFGLNYHIAVVLVGVLMMMYVLFGGMLATTWVQIIKAVLLLFGASFMAFMVMKHVGFSFNNLFSEAMAVHPKGVDIMKPGGLVKDPISALSLGLGLMFGTAGLPHILMRFFTVSDAREARKSVFYATGFMGYFYILTFIIGFGAIMLVGANPEYKDAAGHLIGGNNMAAVHLANAVGGNLFLGFISAVAFATILAVVAGLTLAGASAVSHDLYANVFKKGATEREELRVSKITVLILGVIAIILGVLFENQNIAFMVGLAFAIAASCNFPIILLSMYWSKLTTRGAMLGGWLGLITAVVLMILGPTIWVQILGHEKAIFPYEYPALFSISVAFLGIWLFSATDNSAEGARERELFRAQFIRSQTGFGVEQGRAH</sequence>
<protein>
    <recommendedName>
        <fullName evidence="1">Cation/acetate symporter ActP</fullName>
    </recommendedName>
    <alternativeName>
        <fullName evidence="1">Acetate permease</fullName>
    </alternativeName>
    <alternativeName>
        <fullName evidence="1">Acetate transporter ActP</fullName>
    </alternativeName>
</protein>
<evidence type="ECO:0000255" key="1">
    <source>
        <dbReference type="HAMAP-Rule" id="MF_01426"/>
    </source>
</evidence>
<comment type="function">
    <text evidence="1">Transports acetate.</text>
</comment>
<comment type="subcellular location">
    <subcellularLocation>
        <location evidence="1">Cell inner membrane</location>
        <topology evidence="1">Multi-pass membrane protein</topology>
    </subcellularLocation>
</comment>
<comment type="similarity">
    <text evidence="1">Belongs to the sodium:solute symporter (SSF) (TC 2.A.21) family.</text>
</comment>